<evidence type="ECO:0000255" key="1">
    <source>
        <dbReference type="HAMAP-Rule" id="MF_01321"/>
    </source>
</evidence>
<organism>
    <name type="scientific">Pectobacterium carotovorum subsp. carotovorum (strain PC1)</name>
    <dbReference type="NCBI Taxonomy" id="561230"/>
    <lineage>
        <taxon>Bacteria</taxon>
        <taxon>Pseudomonadati</taxon>
        <taxon>Pseudomonadota</taxon>
        <taxon>Gammaproteobacteria</taxon>
        <taxon>Enterobacterales</taxon>
        <taxon>Pectobacteriaceae</taxon>
        <taxon>Pectobacterium</taxon>
    </lineage>
</organism>
<accession>C6DHR5</accession>
<sequence length="1342" mass="150668">MVYSYTEKKRIRKDFGKRPQVLDIPYLLSIQLDSFQKFIEQDPEGQYGLEAAFRSVFPIKSYSGNSELQYVSYRLGEPVFDVKECQIRGVTFSAPLRVKLRLVIYEREAPEGTVKDIKEQEVYMGEIPLMTDNGTFVINGTERVIVSQLHRSPGVFFDSDKGKTHSSGKVLYNARIIPYRGSWLDFEFDPKDNLFVRIDRRRKLPATIILRALGYSTEQILDLFFDKIVYEINGNKLQMDLVPERLRGETASFDIEANGKVYIEKGRRITARHIRQLEKDGIERIEVPVEYIAGKVLSKDYIDESTGELIGAANMELSLDLLAKLSQSGHKRIETLFTNDLDHGAYMSETVRVDPSNDRLSALVEIYRMMRPGEPPTREAAETLFENLFFSEDRYDLSAVGRMKFNRSLLRDEIEGSGILSKDDIIEVMKKLIDIRNGKGEVDDIDHLGNRRIRSVGEMAENQFRVGLVRVERAVKERLSLGDLDTLMPQDMINAKPISAAVKEFFGSSQLSQFMDQNNPLSEITHKRRISALGPGGLTRERAGFEVRDVHPTHYGRVCPIETPEGPNIGLINSLSVYAQTNEYGFLETPYRRVRDNVVTDEIHYLSAIEEGNFVIAQANTNLDEEGRFIDELVTCRNKGESSLFSRDQVEYMDVSTQQVVSVGASLIPFLEHDDANRALMGANMQRQAVPTLRADKPLVGTGMERAVAVDSGVTAVAKRGGTVQYVDASRIVIRVNDDEMYPGEAGIDIYNLTKYTRSNQNTCISQMPCVSLGEPVERGDVLADGPSTDLGELALGQNMRVAFMPWNGYNFEDSILVSERVVQEDRFTTIHIQELACVSRDTKLGPEEITADIPNVGEAALSKLDESGIVYIGAEVTGGDILVGKVTPKGETQLTPEEKLLRAIFGEKASDVKDSSLRVPNGVSGTIIDVQVFTRDGVEKDKRALEIEEMQLKQAKKDLTEELQILEAGLFARIHAVLVSGGVEADKLDKLPRERWLELGLTDEDKQNQLEQLAEQYDELKHEFEKKLEAKRRKITQGDDLAPGVLKIVKVYLAVKRQIQPGDKMAGRHGNKGVISKINPIEDMPYDENGTPVDIVLNPLGVPSRMNIGQILETHLGMAAKGIGEKINAMLKQHEEVTKLREFIQRAYDLGDDVRQKVDLSTFSDEEVMRLAENLKKGMPIATPVFDGAKEKEIKELLQMGGIPTSGQITLYDGRTGEKFERQVTVGYMYMLKLNHLVDDKMHARSTGSYSLVTQQPLGGKAQFGGQRFGEMEVWALEAYGAAYTLQEMLTVKSDDVNGRTKMYKNIVDGNHQMEPGMPESFNVLLKEIRSLGINIELEEE</sequence>
<reference key="1">
    <citation type="submission" date="2009-07" db="EMBL/GenBank/DDBJ databases">
        <title>Complete sequence of Pectobacterium carotovorum subsp. carotovorum PC1.</title>
        <authorList>
            <consortium name="US DOE Joint Genome Institute"/>
            <person name="Lucas S."/>
            <person name="Copeland A."/>
            <person name="Lapidus A."/>
            <person name="Glavina del Rio T."/>
            <person name="Tice H."/>
            <person name="Bruce D."/>
            <person name="Goodwin L."/>
            <person name="Pitluck S."/>
            <person name="Munk A.C."/>
            <person name="Brettin T."/>
            <person name="Detter J.C."/>
            <person name="Han C."/>
            <person name="Tapia R."/>
            <person name="Larimer F."/>
            <person name="Land M."/>
            <person name="Hauser L."/>
            <person name="Kyrpides N."/>
            <person name="Mikhailova N."/>
            <person name="Balakrishnan V."/>
            <person name="Glasner J."/>
            <person name="Perna N.T."/>
        </authorList>
    </citation>
    <scope>NUCLEOTIDE SEQUENCE [LARGE SCALE GENOMIC DNA]</scope>
    <source>
        <strain>PC1</strain>
    </source>
</reference>
<feature type="chain" id="PRO_1000214483" description="DNA-directed RNA polymerase subunit beta">
    <location>
        <begin position="1"/>
        <end position="1342"/>
    </location>
</feature>
<comment type="function">
    <text evidence="1">DNA-dependent RNA polymerase catalyzes the transcription of DNA into RNA using the four ribonucleoside triphosphates as substrates.</text>
</comment>
<comment type="catalytic activity">
    <reaction evidence="1">
        <text>RNA(n) + a ribonucleoside 5'-triphosphate = RNA(n+1) + diphosphate</text>
        <dbReference type="Rhea" id="RHEA:21248"/>
        <dbReference type="Rhea" id="RHEA-COMP:14527"/>
        <dbReference type="Rhea" id="RHEA-COMP:17342"/>
        <dbReference type="ChEBI" id="CHEBI:33019"/>
        <dbReference type="ChEBI" id="CHEBI:61557"/>
        <dbReference type="ChEBI" id="CHEBI:140395"/>
        <dbReference type="EC" id="2.7.7.6"/>
    </reaction>
</comment>
<comment type="subunit">
    <text evidence="1">The RNAP catalytic core consists of 2 alpha, 1 beta, 1 beta' and 1 omega subunit. When a sigma factor is associated with the core the holoenzyme is formed, which can initiate transcription.</text>
</comment>
<comment type="similarity">
    <text evidence="1">Belongs to the RNA polymerase beta chain family.</text>
</comment>
<protein>
    <recommendedName>
        <fullName evidence="1">DNA-directed RNA polymerase subunit beta</fullName>
        <shortName evidence="1">RNAP subunit beta</shortName>
        <ecNumber evidence="1">2.7.7.6</ecNumber>
    </recommendedName>
    <alternativeName>
        <fullName evidence="1">RNA polymerase subunit beta</fullName>
    </alternativeName>
    <alternativeName>
        <fullName evidence="1">Transcriptase subunit beta</fullName>
    </alternativeName>
</protein>
<gene>
    <name evidence="1" type="primary">rpoB</name>
    <name type="ordered locus">PC1_0205</name>
</gene>
<dbReference type="EC" id="2.7.7.6" evidence="1"/>
<dbReference type="EMBL" id="CP001657">
    <property type="protein sequence ID" value="ACT11265.1"/>
    <property type="molecule type" value="Genomic_DNA"/>
</dbReference>
<dbReference type="RefSeq" id="WP_012772936.1">
    <property type="nucleotide sequence ID" value="NC_012917.1"/>
</dbReference>
<dbReference type="SMR" id="C6DHR5"/>
<dbReference type="STRING" id="561230.PC1_0205"/>
<dbReference type="GeneID" id="67795998"/>
<dbReference type="KEGG" id="pct:PC1_0205"/>
<dbReference type="eggNOG" id="COG0085">
    <property type="taxonomic scope" value="Bacteria"/>
</dbReference>
<dbReference type="HOGENOM" id="CLU_000524_4_0_6"/>
<dbReference type="OrthoDB" id="9803954at2"/>
<dbReference type="Proteomes" id="UP000002736">
    <property type="component" value="Chromosome"/>
</dbReference>
<dbReference type="GO" id="GO:0000428">
    <property type="term" value="C:DNA-directed RNA polymerase complex"/>
    <property type="evidence" value="ECO:0007669"/>
    <property type="project" value="UniProtKB-KW"/>
</dbReference>
<dbReference type="GO" id="GO:0003677">
    <property type="term" value="F:DNA binding"/>
    <property type="evidence" value="ECO:0007669"/>
    <property type="project" value="UniProtKB-UniRule"/>
</dbReference>
<dbReference type="GO" id="GO:0003899">
    <property type="term" value="F:DNA-directed RNA polymerase activity"/>
    <property type="evidence" value="ECO:0007669"/>
    <property type="project" value="UniProtKB-UniRule"/>
</dbReference>
<dbReference type="GO" id="GO:0032549">
    <property type="term" value="F:ribonucleoside binding"/>
    <property type="evidence" value="ECO:0007669"/>
    <property type="project" value="InterPro"/>
</dbReference>
<dbReference type="GO" id="GO:0006351">
    <property type="term" value="P:DNA-templated transcription"/>
    <property type="evidence" value="ECO:0007669"/>
    <property type="project" value="UniProtKB-UniRule"/>
</dbReference>
<dbReference type="CDD" id="cd00653">
    <property type="entry name" value="RNA_pol_B_RPB2"/>
    <property type="match status" value="1"/>
</dbReference>
<dbReference type="FunFam" id="2.30.150.10:FF:000001">
    <property type="entry name" value="DNA-directed RNA polymerase subunit beta"/>
    <property type="match status" value="1"/>
</dbReference>
<dbReference type="FunFam" id="2.40.270.10:FF:000003">
    <property type="entry name" value="DNA-directed RNA polymerase subunit beta"/>
    <property type="match status" value="1"/>
</dbReference>
<dbReference type="FunFam" id="2.40.270.10:FF:000004">
    <property type="entry name" value="DNA-directed RNA polymerase subunit beta"/>
    <property type="match status" value="1"/>
</dbReference>
<dbReference type="FunFam" id="2.40.50.100:FF:000006">
    <property type="entry name" value="DNA-directed RNA polymerase subunit beta"/>
    <property type="match status" value="1"/>
</dbReference>
<dbReference type="FunFam" id="2.40.50.150:FF:000001">
    <property type="entry name" value="DNA-directed RNA polymerase subunit beta"/>
    <property type="match status" value="1"/>
</dbReference>
<dbReference type="FunFam" id="3.90.1100.10:FF:000002">
    <property type="entry name" value="DNA-directed RNA polymerase subunit beta"/>
    <property type="match status" value="1"/>
</dbReference>
<dbReference type="FunFam" id="3.90.1110.10:FF:000001">
    <property type="entry name" value="DNA-directed RNA polymerase subunit beta"/>
    <property type="match status" value="1"/>
</dbReference>
<dbReference type="FunFam" id="3.90.1110.10:FF:000004">
    <property type="entry name" value="DNA-directed RNA polymerase subunit beta"/>
    <property type="match status" value="1"/>
</dbReference>
<dbReference type="FunFam" id="3.90.1800.10:FF:000001">
    <property type="entry name" value="DNA-directed RNA polymerase subunit beta"/>
    <property type="match status" value="1"/>
</dbReference>
<dbReference type="Gene3D" id="2.40.50.100">
    <property type="match status" value="1"/>
</dbReference>
<dbReference type="Gene3D" id="2.40.50.150">
    <property type="match status" value="1"/>
</dbReference>
<dbReference type="Gene3D" id="3.90.1100.10">
    <property type="match status" value="2"/>
</dbReference>
<dbReference type="Gene3D" id="6.10.140.1670">
    <property type="match status" value="1"/>
</dbReference>
<dbReference type="Gene3D" id="2.30.150.10">
    <property type="entry name" value="DNA-directed RNA polymerase, beta subunit, external 1 domain"/>
    <property type="match status" value="1"/>
</dbReference>
<dbReference type="Gene3D" id="2.40.270.10">
    <property type="entry name" value="DNA-directed RNA polymerase, subunit 2, domain 6"/>
    <property type="match status" value="1"/>
</dbReference>
<dbReference type="Gene3D" id="3.90.1800.10">
    <property type="entry name" value="RNA polymerase alpha subunit dimerisation domain"/>
    <property type="match status" value="1"/>
</dbReference>
<dbReference type="Gene3D" id="3.90.1110.10">
    <property type="entry name" value="RNA polymerase Rpb2, domain 2"/>
    <property type="match status" value="1"/>
</dbReference>
<dbReference type="HAMAP" id="MF_01321">
    <property type="entry name" value="RNApol_bact_RpoB"/>
    <property type="match status" value="1"/>
</dbReference>
<dbReference type="InterPro" id="IPR042107">
    <property type="entry name" value="DNA-dir_RNA_pol_bsu_ext_1_sf"/>
</dbReference>
<dbReference type="InterPro" id="IPR019462">
    <property type="entry name" value="DNA-dir_RNA_pol_bsu_external_1"/>
</dbReference>
<dbReference type="InterPro" id="IPR015712">
    <property type="entry name" value="DNA-dir_RNA_pol_su2"/>
</dbReference>
<dbReference type="InterPro" id="IPR007120">
    <property type="entry name" value="DNA-dir_RNAP_su2_dom"/>
</dbReference>
<dbReference type="InterPro" id="IPR037033">
    <property type="entry name" value="DNA-dir_RNAP_su2_hyb_sf"/>
</dbReference>
<dbReference type="InterPro" id="IPR010243">
    <property type="entry name" value="RNA_pol_bsu_bac"/>
</dbReference>
<dbReference type="InterPro" id="IPR007121">
    <property type="entry name" value="RNA_pol_bsu_CS"/>
</dbReference>
<dbReference type="InterPro" id="IPR007644">
    <property type="entry name" value="RNA_pol_bsu_protrusion"/>
</dbReference>
<dbReference type="InterPro" id="IPR007642">
    <property type="entry name" value="RNA_pol_Rpb2_2"/>
</dbReference>
<dbReference type="InterPro" id="IPR037034">
    <property type="entry name" value="RNA_pol_Rpb2_2_sf"/>
</dbReference>
<dbReference type="InterPro" id="IPR007645">
    <property type="entry name" value="RNA_pol_Rpb2_3"/>
</dbReference>
<dbReference type="InterPro" id="IPR007641">
    <property type="entry name" value="RNA_pol_Rpb2_7"/>
</dbReference>
<dbReference type="InterPro" id="IPR014724">
    <property type="entry name" value="RNA_pol_RPB2_OB-fold"/>
</dbReference>
<dbReference type="NCBIfam" id="NF001616">
    <property type="entry name" value="PRK00405.1"/>
    <property type="match status" value="1"/>
</dbReference>
<dbReference type="NCBIfam" id="TIGR02013">
    <property type="entry name" value="rpoB"/>
    <property type="match status" value="1"/>
</dbReference>
<dbReference type="PANTHER" id="PTHR20856">
    <property type="entry name" value="DNA-DIRECTED RNA POLYMERASE I SUBUNIT 2"/>
    <property type="match status" value="1"/>
</dbReference>
<dbReference type="Pfam" id="PF04563">
    <property type="entry name" value="RNA_pol_Rpb2_1"/>
    <property type="match status" value="1"/>
</dbReference>
<dbReference type="Pfam" id="PF04561">
    <property type="entry name" value="RNA_pol_Rpb2_2"/>
    <property type="match status" value="2"/>
</dbReference>
<dbReference type="Pfam" id="PF04565">
    <property type="entry name" value="RNA_pol_Rpb2_3"/>
    <property type="match status" value="1"/>
</dbReference>
<dbReference type="Pfam" id="PF10385">
    <property type="entry name" value="RNA_pol_Rpb2_45"/>
    <property type="match status" value="1"/>
</dbReference>
<dbReference type="Pfam" id="PF00562">
    <property type="entry name" value="RNA_pol_Rpb2_6"/>
    <property type="match status" value="1"/>
</dbReference>
<dbReference type="Pfam" id="PF04560">
    <property type="entry name" value="RNA_pol_Rpb2_7"/>
    <property type="match status" value="1"/>
</dbReference>
<dbReference type="SUPFAM" id="SSF64484">
    <property type="entry name" value="beta and beta-prime subunits of DNA dependent RNA-polymerase"/>
    <property type="match status" value="1"/>
</dbReference>
<dbReference type="PROSITE" id="PS01166">
    <property type="entry name" value="RNA_POL_BETA"/>
    <property type="match status" value="1"/>
</dbReference>
<keyword id="KW-0240">DNA-directed RNA polymerase</keyword>
<keyword id="KW-0548">Nucleotidyltransferase</keyword>
<keyword id="KW-0804">Transcription</keyword>
<keyword id="KW-0808">Transferase</keyword>
<name>RPOB_PECCP</name>
<proteinExistence type="inferred from homology"/>